<feature type="chain" id="PRO_1000201262" description="UPF0502 protein YPTS_2082">
    <location>
        <begin position="1"/>
        <end position="233"/>
    </location>
</feature>
<gene>
    <name type="ordered locus">YPTS_2082</name>
</gene>
<proteinExistence type="inferred from homology"/>
<sequence length="233" mass="26380">MKHNLNAHEARVIGCLLEKQVTTPEQYPMSLNGLTLACNQKTSRDPVMELSESQVQQTLDFLLKKHLIRSQSGNRVMKYEHRFCNSEFGDLKFSPAEVAVITLLLLRGAQTPGELRTRTNRMYEFADVAETEETLKTLSLREDGPFVVRLAREPGKRESRFMPLFSGDVASSLLAAGEAEEDNHTLEANPRETHSFENIALEKTALEARVAQLEQQVIQLSRRLDDVLIQLDD</sequence>
<protein>
    <recommendedName>
        <fullName evidence="1">UPF0502 protein YPTS_2082</fullName>
    </recommendedName>
</protein>
<name>Y2082_YERPB</name>
<reference key="1">
    <citation type="submission" date="2008-04" db="EMBL/GenBank/DDBJ databases">
        <title>Complete sequence of Yersinia pseudotuberculosis PB1/+.</title>
        <authorList>
            <person name="Copeland A."/>
            <person name="Lucas S."/>
            <person name="Lapidus A."/>
            <person name="Glavina del Rio T."/>
            <person name="Dalin E."/>
            <person name="Tice H."/>
            <person name="Bruce D."/>
            <person name="Goodwin L."/>
            <person name="Pitluck S."/>
            <person name="Munk A.C."/>
            <person name="Brettin T."/>
            <person name="Detter J.C."/>
            <person name="Han C."/>
            <person name="Tapia R."/>
            <person name="Schmutz J."/>
            <person name="Larimer F."/>
            <person name="Land M."/>
            <person name="Hauser L."/>
            <person name="Challacombe J.F."/>
            <person name="Green L."/>
            <person name="Lindler L.E."/>
            <person name="Nikolich M.P."/>
            <person name="Richardson P."/>
        </authorList>
    </citation>
    <scope>NUCLEOTIDE SEQUENCE [LARGE SCALE GENOMIC DNA]</scope>
    <source>
        <strain>PB1/+</strain>
    </source>
</reference>
<accession>B2K308</accession>
<dbReference type="EMBL" id="CP001048">
    <property type="protein sequence ID" value="ACC89047.1"/>
    <property type="molecule type" value="Genomic_DNA"/>
</dbReference>
<dbReference type="RefSeq" id="WP_012413713.1">
    <property type="nucleotide sequence ID" value="NZ_CP009780.1"/>
</dbReference>
<dbReference type="SMR" id="B2K308"/>
<dbReference type="GeneID" id="49785986"/>
<dbReference type="KEGG" id="ypb:YPTS_2082"/>
<dbReference type="Gene3D" id="1.10.10.10">
    <property type="entry name" value="Winged helix-like DNA-binding domain superfamily/Winged helix DNA-binding domain"/>
    <property type="match status" value="2"/>
</dbReference>
<dbReference type="HAMAP" id="MF_01584">
    <property type="entry name" value="UPF0502"/>
    <property type="match status" value="1"/>
</dbReference>
<dbReference type="InterPro" id="IPR007432">
    <property type="entry name" value="DUF480"/>
</dbReference>
<dbReference type="InterPro" id="IPR036388">
    <property type="entry name" value="WH-like_DNA-bd_sf"/>
</dbReference>
<dbReference type="InterPro" id="IPR036390">
    <property type="entry name" value="WH_DNA-bd_sf"/>
</dbReference>
<dbReference type="NCBIfam" id="NF008413">
    <property type="entry name" value="PRK11239.1"/>
    <property type="match status" value="1"/>
</dbReference>
<dbReference type="PANTHER" id="PTHR38768">
    <property type="entry name" value="UPF0502 PROTEIN YCEH"/>
    <property type="match status" value="1"/>
</dbReference>
<dbReference type="PANTHER" id="PTHR38768:SF1">
    <property type="entry name" value="UPF0502 PROTEIN YCEH"/>
    <property type="match status" value="1"/>
</dbReference>
<dbReference type="Pfam" id="PF04337">
    <property type="entry name" value="DUF480"/>
    <property type="match status" value="1"/>
</dbReference>
<dbReference type="SUPFAM" id="SSF46785">
    <property type="entry name" value="Winged helix' DNA-binding domain"/>
    <property type="match status" value="2"/>
</dbReference>
<organism>
    <name type="scientific">Yersinia pseudotuberculosis serotype IB (strain PB1/+)</name>
    <dbReference type="NCBI Taxonomy" id="502801"/>
    <lineage>
        <taxon>Bacteria</taxon>
        <taxon>Pseudomonadati</taxon>
        <taxon>Pseudomonadota</taxon>
        <taxon>Gammaproteobacteria</taxon>
        <taxon>Enterobacterales</taxon>
        <taxon>Yersiniaceae</taxon>
        <taxon>Yersinia</taxon>
    </lineage>
</organism>
<comment type="similarity">
    <text evidence="1">Belongs to the UPF0502 family.</text>
</comment>
<evidence type="ECO:0000255" key="1">
    <source>
        <dbReference type="HAMAP-Rule" id="MF_01584"/>
    </source>
</evidence>